<proteinExistence type="inferred from homology"/>
<dbReference type="EMBL" id="AAFI02000004">
    <property type="protein sequence ID" value="EAL72949.2"/>
    <property type="molecule type" value="Genomic_DNA"/>
</dbReference>
<dbReference type="RefSeq" id="XP_646897.2">
    <property type="nucleotide sequence ID" value="XM_641805.2"/>
</dbReference>
<dbReference type="STRING" id="44689.Q55EX3"/>
<dbReference type="PaxDb" id="44689-DDB0266534"/>
<dbReference type="EnsemblProtists" id="EAL72949">
    <property type="protein sequence ID" value="EAL72949"/>
    <property type="gene ID" value="DDB_G0268720"/>
</dbReference>
<dbReference type="GeneID" id="8616582"/>
<dbReference type="KEGG" id="ddi:DDB_G0268720"/>
<dbReference type="dictyBase" id="DDB_G0268720">
    <property type="gene designation" value="selk"/>
</dbReference>
<dbReference type="VEuPathDB" id="AmoebaDB:DDB_G0268720"/>
<dbReference type="eggNOG" id="ENOG502RIJT">
    <property type="taxonomic scope" value="Eukaryota"/>
</dbReference>
<dbReference type="HOGENOM" id="CLU_2113551_0_0_1"/>
<dbReference type="InParanoid" id="Q55EX3"/>
<dbReference type="PRO" id="PR:Q55EX3"/>
<dbReference type="Proteomes" id="UP000002195">
    <property type="component" value="Chromosome 1"/>
</dbReference>
<dbReference type="GO" id="GO:0005789">
    <property type="term" value="C:endoplasmic reticulum membrane"/>
    <property type="evidence" value="ECO:0000318"/>
    <property type="project" value="GO_Central"/>
</dbReference>
<dbReference type="GO" id="GO:0005794">
    <property type="term" value="C:Golgi apparatus"/>
    <property type="evidence" value="ECO:0000318"/>
    <property type="project" value="GO_Central"/>
</dbReference>
<dbReference type="GO" id="GO:0006816">
    <property type="term" value="P:calcium ion transport"/>
    <property type="evidence" value="ECO:0000318"/>
    <property type="project" value="GO_Central"/>
</dbReference>
<dbReference type="GO" id="GO:0032469">
    <property type="term" value="P:endoplasmic reticulum calcium ion homeostasis"/>
    <property type="evidence" value="ECO:0000318"/>
    <property type="project" value="GO_Central"/>
</dbReference>
<dbReference type="InterPro" id="IPR024491">
    <property type="entry name" value="Se_SelK/SelG"/>
</dbReference>
<dbReference type="PANTHER" id="PTHR16875">
    <property type="entry name" value="SELENOPROTEIN K"/>
    <property type="match status" value="1"/>
</dbReference>
<dbReference type="PANTHER" id="PTHR16875:SF0">
    <property type="entry name" value="SELENOPROTEIN K"/>
    <property type="match status" value="1"/>
</dbReference>
<dbReference type="Pfam" id="PF10961">
    <property type="entry name" value="SelK_SelG"/>
    <property type="match status" value="1"/>
</dbReference>
<protein>
    <recommendedName>
        <fullName>Selenoprotein K homolog</fullName>
    </recommendedName>
</protein>
<accession>Q55EX3</accession>
<organism>
    <name type="scientific">Dictyostelium discoideum</name>
    <name type="common">Social amoeba</name>
    <dbReference type="NCBI Taxonomy" id="44689"/>
    <lineage>
        <taxon>Eukaryota</taxon>
        <taxon>Amoebozoa</taxon>
        <taxon>Evosea</taxon>
        <taxon>Eumycetozoa</taxon>
        <taxon>Dictyostelia</taxon>
        <taxon>Dictyosteliales</taxon>
        <taxon>Dictyosteliaceae</taxon>
        <taxon>Dictyostelium</taxon>
    </lineage>
</organism>
<keyword id="KW-0472">Membrane</keyword>
<keyword id="KW-1185">Reference proteome</keyword>
<keyword id="KW-0712">Selenocysteine</keyword>
<keyword id="KW-0812">Transmembrane</keyword>
<keyword id="KW-1133">Transmembrane helix</keyword>
<name>SELK_DICDI</name>
<reference key="1">
    <citation type="journal article" date="2005" name="Nature">
        <title>The genome of the social amoeba Dictyostelium discoideum.</title>
        <authorList>
            <person name="Eichinger L."/>
            <person name="Pachebat J.A."/>
            <person name="Gloeckner G."/>
            <person name="Rajandream M.A."/>
            <person name="Sucgang R."/>
            <person name="Berriman M."/>
            <person name="Song J."/>
            <person name="Olsen R."/>
            <person name="Szafranski K."/>
            <person name="Xu Q."/>
            <person name="Tunggal B."/>
            <person name="Kummerfeld S."/>
            <person name="Madera M."/>
            <person name="Konfortov B.A."/>
            <person name="Rivero F."/>
            <person name="Bankier A.T."/>
            <person name="Lehmann R."/>
            <person name="Hamlin N."/>
            <person name="Davies R."/>
            <person name="Gaudet P."/>
            <person name="Fey P."/>
            <person name="Pilcher K."/>
            <person name="Chen G."/>
            <person name="Saunders D."/>
            <person name="Sodergren E.J."/>
            <person name="Davis P."/>
            <person name="Kerhornou A."/>
            <person name="Nie X."/>
            <person name="Hall N."/>
            <person name="Anjard C."/>
            <person name="Hemphill L."/>
            <person name="Bason N."/>
            <person name="Farbrother P."/>
            <person name="Desany B."/>
            <person name="Just E."/>
            <person name="Morio T."/>
            <person name="Rost R."/>
            <person name="Churcher C.M."/>
            <person name="Cooper J."/>
            <person name="Haydock S."/>
            <person name="van Driessche N."/>
            <person name="Cronin A."/>
            <person name="Goodhead I."/>
            <person name="Muzny D.M."/>
            <person name="Mourier T."/>
            <person name="Pain A."/>
            <person name="Lu M."/>
            <person name="Harper D."/>
            <person name="Lindsay R."/>
            <person name="Hauser H."/>
            <person name="James K.D."/>
            <person name="Quiles M."/>
            <person name="Madan Babu M."/>
            <person name="Saito T."/>
            <person name="Buchrieser C."/>
            <person name="Wardroper A."/>
            <person name="Felder M."/>
            <person name="Thangavelu M."/>
            <person name="Johnson D."/>
            <person name="Knights A."/>
            <person name="Loulseged H."/>
            <person name="Mungall K.L."/>
            <person name="Oliver K."/>
            <person name="Price C."/>
            <person name="Quail M.A."/>
            <person name="Urushihara H."/>
            <person name="Hernandez J."/>
            <person name="Rabbinowitsch E."/>
            <person name="Steffen D."/>
            <person name="Sanders M."/>
            <person name="Ma J."/>
            <person name="Kohara Y."/>
            <person name="Sharp S."/>
            <person name="Simmonds M.N."/>
            <person name="Spiegler S."/>
            <person name="Tivey A."/>
            <person name="Sugano S."/>
            <person name="White B."/>
            <person name="Walker D."/>
            <person name="Woodward J.R."/>
            <person name="Winckler T."/>
            <person name="Tanaka Y."/>
            <person name="Shaulsky G."/>
            <person name="Schleicher M."/>
            <person name="Weinstock G.M."/>
            <person name="Rosenthal A."/>
            <person name="Cox E.C."/>
            <person name="Chisholm R.L."/>
            <person name="Gibbs R.A."/>
            <person name="Loomis W.F."/>
            <person name="Platzer M."/>
            <person name="Kay R.R."/>
            <person name="Williams J.G."/>
            <person name="Dear P.H."/>
            <person name="Noegel A.A."/>
            <person name="Barrell B.G."/>
            <person name="Kuspa A."/>
        </authorList>
    </citation>
    <scope>NUCLEOTIDE SEQUENCE [LARGE SCALE GENOMIC DNA]</scope>
    <source>
        <strain>AX4</strain>
    </source>
</reference>
<evidence type="ECO:0000250" key="1"/>
<evidence type="ECO:0000255" key="2"/>
<evidence type="ECO:0000256" key="3">
    <source>
        <dbReference type="SAM" id="MobiDB-lite"/>
    </source>
</evidence>
<evidence type="ECO:0000305" key="4"/>
<feature type="chain" id="PRO_0000328438" description="Selenoprotein K homolog">
    <location>
        <begin position="1"/>
        <end position="115"/>
    </location>
</feature>
<feature type="transmembrane region" description="Helical" evidence="2">
    <location>
        <begin position="29"/>
        <end position="49"/>
    </location>
</feature>
<feature type="region of interest" description="Disordered" evidence="3">
    <location>
        <begin position="48"/>
        <end position="115"/>
    </location>
</feature>
<feature type="compositionally biased region" description="Gly residues" evidence="3">
    <location>
        <begin position="58"/>
        <end position="84"/>
    </location>
</feature>
<feature type="compositionally biased region" description="Polar residues" evidence="3">
    <location>
        <begin position="104"/>
        <end position="115"/>
    </location>
</feature>
<feature type="non-standard amino acid" description="Selenocysteine" evidence="1">
    <location>
        <position position="112"/>
    </location>
</feature>
<gene>
    <name type="primary">selk</name>
    <name type="ORF">DDB_G0268720</name>
</gene>
<sequence length="115" mass="12036">MPPKPTYVSGGSVTQTGRSKWRLSYIPEFIWGILNQITFFFSTLIGGTVEPRRRPNNQGGGRRLAGFDGNGNVTGGSGVGGSGPSKGPDNGSNNRRGDMKNILACNSASGSUGPK</sequence>
<comment type="subcellular location">
    <subcellularLocation>
        <location evidence="4">Membrane</location>
        <topology evidence="4">Single-pass membrane protein</topology>
    </subcellularLocation>
</comment>
<comment type="similarity">
    <text evidence="4">Belongs to the selenoprotein K family.</text>
</comment>